<gene>
    <name evidence="1" type="primary">thrS</name>
    <name type="ordered locus">Aflv_0521</name>
</gene>
<comment type="function">
    <text evidence="1">Catalyzes the attachment of threonine to tRNA(Thr) in a two-step reaction: L-threonine is first activated by ATP to form Thr-AMP and then transferred to the acceptor end of tRNA(Thr). Also edits incorrectly charged L-seryl-tRNA(Thr).</text>
</comment>
<comment type="catalytic activity">
    <reaction evidence="1">
        <text>tRNA(Thr) + L-threonine + ATP = L-threonyl-tRNA(Thr) + AMP + diphosphate + H(+)</text>
        <dbReference type="Rhea" id="RHEA:24624"/>
        <dbReference type="Rhea" id="RHEA-COMP:9670"/>
        <dbReference type="Rhea" id="RHEA-COMP:9704"/>
        <dbReference type="ChEBI" id="CHEBI:15378"/>
        <dbReference type="ChEBI" id="CHEBI:30616"/>
        <dbReference type="ChEBI" id="CHEBI:33019"/>
        <dbReference type="ChEBI" id="CHEBI:57926"/>
        <dbReference type="ChEBI" id="CHEBI:78442"/>
        <dbReference type="ChEBI" id="CHEBI:78534"/>
        <dbReference type="ChEBI" id="CHEBI:456215"/>
        <dbReference type="EC" id="6.1.1.3"/>
    </reaction>
</comment>
<comment type="cofactor">
    <cofactor evidence="1">
        <name>Zn(2+)</name>
        <dbReference type="ChEBI" id="CHEBI:29105"/>
    </cofactor>
    <text evidence="1">Binds 1 zinc ion per subunit.</text>
</comment>
<comment type="subunit">
    <text evidence="1">Homodimer.</text>
</comment>
<comment type="subcellular location">
    <subcellularLocation>
        <location evidence="1">Cytoplasm</location>
    </subcellularLocation>
</comment>
<comment type="similarity">
    <text evidence="1">Belongs to the class-II aminoacyl-tRNA synthetase family.</text>
</comment>
<keyword id="KW-0030">Aminoacyl-tRNA synthetase</keyword>
<keyword id="KW-0067">ATP-binding</keyword>
<keyword id="KW-0963">Cytoplasm</keyword>
<keyword id="KW-0436">Ligase</keyword>
<keyword id="KW-0479">Metal-binding</keyword>
<keyword id="KW-0547">Nucleotide-binding</keyword>
<keyword id="KW-0648">Protein biosynthesis</keyword>
<keyword id="KW-0694">RNA-binding</keyword>
<keyword id="KW-0820">tRNA-binding</keyword>
<keyword id="KW-0862">Zinc</keyword>
<organism>
    <name type="scientific">Anoxybacillus flavithermus (strain DSM 21510 / WK1)</name>
    <dbReference type="NCBI Taxonomy" id="491915"/>
    <lineage>
        <taxon>Bacteria</taxon>
        <taxon>Bacillati</taxon>
        <taxon>Bacillota</taxon>
        <taxon>Bacilli</taxon>
        <taxon>Bacillales</taxon>
        <taxon>Anoxybacillaceae</taxon>
        <taxon>Anoxybacillus</taxon>
    </lineage>
</organism>
<accession>B7GGN9</accession>
<protein>
    <recommendedName>
        <fullName evidence="1">Threonine--tRNA ligase</fullName>
        <ecNumber evidence="1">6.1.1.3</ecNumber>
    </recommendedName>
    <alternativeName>
        <fullName evidence="1">Threonyl-tRNA synthetase</fullName>
        <shortName evidence="1">ThrRS</shortName>
    </alternativeName>
</protein>
<reference key="1">
    <citation type="journal article" date="2008" name="Genome Biol.">
        <title>Encapsulated in silica: genome, proteome and physiology of the thermophilic bacterium Anoxybacillus flavithermus WK1.</title>
        <authorList>
            <person name="Saw J.H."/>
            <person name="Mountain B.W."/>
            <person name="Feng L."/>
            <person name="Omelchenko M.V."/>
            <person name="Hou S."/>
            <person name="Saito J.A."/>
            <person name="Stott M.B."/>
            <person name="Li D."/>
            <person name="Zhao G."/>
            <person name="Wu J."/>
            <person name="Galperin M.Y."/>
            <person name="Koonin E.V."/>
            <person name="Makarova K.S."/>
            <person name="Wolf Y.I."/>
            <person name="Rigden D.J."/>
            <person name="Dunfield P.F."/>
            <person name="Wang L."/>
            <person name="Alam M."/>
        </authorList>
    </citation>
    <scope>NUCLEOTIDE SEQUENCE [LARGE SCALE GENOMIC DNA]</scope>
    <source>
        <strain>DSM 21510 / WK1</strain>
    </source>
</reference>
<dbReference type="EC" id="6.1.1.3" evidence="1"/>
<dbReference type="EMBL" id="CP000922">
    <property type="protein sequence ID" value="ACJ32905.1"/>
    <property type="molecule type" value="Genomic_DNA"/>
</dbReference>
<dbReference type="RefSeq" id="WP_012574223.1">
    <property type="nucleotide sequence ID" value="NC_011567.1"/>
</dbReference>
<dbReference type="SMR" id="B7GGN9"/>
<dbReference type="STRING" id="491915.Aflv_0521"/>
<dbReference type="GeneID" id="7036778"/>
<dbReference type="KEGG" id="afl:Aflv_0521"/>
<dbReference type="PATRIC" id="fig|491915.6.peg.534"/>
<dbReference type="eggNOG" id="COG0441">
    <property type="taxonomic scope" value="Bacteria"/>
</dbReference>
<dbReference type="HOGENOM" id="CLU_008554_0_1_9"/>
<dbReference type="Proteomes" id="UP000000742">
    <property type="component" value="Chromosome"/>
</dbReference>
<dbReference type="GO" id="GO:0005737">
    <property type="term" value="C:cytoplasm"/>
    <property type="evidence" value="ECO:0007669"/>
    <property type="project" value="UniProtKB-SubCell"/>
</dbReference>
<dbReference type="GO" id="GO:0005524">
    <property type="term" value="F:ATP binding"/>
    <property type="evidence" value="ECO:0007669"/>
    <property type="project" value="UniProtKB-UniRule"/>
</dbReference>
<dbReference type="GO" id="GO:0140096">
    <property type="term" value="F:catalytic activity, acting on a protein"/>
    <property type="evidence" value="ECO:0007669"/>
    <property type="project" value="UniProtKB-ARBA"/>
</dbReference>
<dbReference type="GO" id="GO:0046872">
    <property type="term" value="F:metal ion binding"/>
    <property type="evidence" value="ECO:0007669"/>
    <property type="project" value="UniProtKB-KW"/>
</dbReference>
<dbReference type="GO" id="GO:0004829">
    <property type="term" value="F:threonine-tRNA ligase activity"/>
    <property type="evidence" value="ECO:0007669"/>
    <property type="project" value="UniProtKB-UniRule"/>
</dbReference>
<dbReference type="GO" id="GO:0016740">
    <property type="term" value="F:transferase activity"/>
    <property type="evidence" value="ECO:0007669"/>
    <property type="project" value="UniProtKB-ARBA"/>
</dbReference>
<dbReference type="GO" id="GO:0000049">
    <property type="term" value="F:tRNA binding"/>
    <property type="evidence" value="ECO:0007669"/>
    <property type="project" value="UniProtKB-KW"/>
</dbReference>
<dbReference type="GO" id="GO:0006435">
    <property type="term" value="P:threonyl-tRNA aminoacylation"/>
    <property type="evidence" value="ECO:0007669"/>
    <property type="project" value="UniProtKB-UniRule"/>
</dbReference>
<dbReference type="CDD" id="cd01667">
    <property type="entry name" value="TGS_ThrRS"/>
    <property type="match status" value="1"/>
</dbReference>
<dbReference type="CDD" id="cd00860">
    <property type="entry name" value="ThrRS_anticodon"/>
    <property type="match status" value="1"/>
</dbReference>
<dbReference type="CDD" id="cd00771">
    <property type="entry name" value="ThrRS_core"/>
    <property type="match status" value="1"/>
</dbReference>
<dbReference type="FunFam" id="3.10.20.30:FF:000005">
    <property type="entry name" value="Threonine--tRNA ligase"/>
    <property type="match status" value="1"/>
</dbReference>
<dbReference type="FunFam" id="3.30.54.20:FF:000002">
    <property type="entry name" value="Threonine--tRNA ligase"/>
    <property type="match status" value="1"/>
</dbReference>
<dbReference type="FunFam" id="3.30.930.10:FF:000002">
    <property type="entry name" value="Threonine--tRNA ligase"/>
    <property type="match status" value="1"/>
</dbReference>
<dbReference type="FunFam" id="3.40.50.800:FF:000001">
    <property type="entry name" value="Threonine--tRNA ligase"/>
    <property type="match status" value="1"/>
</dbReference>
<dbReference type="FunFam" id="3.30.980.10:FF:000005">
    <property type="entry name" value="Threonyl-tRNA synthetase, mitochondrial"/>
    <property type="match status" value="1"/>
</dbReference>
<dbReference type="Gene3D" id="3.10.20.30">
    <property type="match status" value="1"/>
</dbReference>
<dbReference type="Gene3D" id="3.30.54.20">
    <property type="match status" value="1"/>
</dbReference>
<dbReference type="Gene3D" id="3.40.50.800">
    <property type="entry name" value="Anticodon-binding domain"/>
    <property type="match status" value="1"/>
</dbReference>
<dbReference type="Gene3D" id="3.30.930.10">
    <property type="entry name" value="Bira Bifunctional Protein, Domain 2"/>
    <property type="match status" value="1"/>
</dbReference>
<dbReference type="Gene3D" id="3.30.980.10">
    <property type="entry name" value="Threonyl-trna Synthetase, Chain A, domain 2"/>
    <property type="match status" value="1"/>
</dbReference>
<dbReference type="HAMAP" id="MF_00184">
    <property type="entry name" value="Thr_tRNA_synth"/>
    <property type="match status" value="1"/>
</dbReference>
<dbReference type="InterPro" id="IPR002314">
    <property type="entry name" value="aa-tRNA-synt_IIb"/>
</dbReference>
<dbReference type="InterPro" id="IPR006195">
    <property type="entry name" value="aa-tRNA-synth_II"/>
</dbReference>
<dbReference type="InterPro" id="IPR045864">
    <property type="entry name" value="aa-tRNA-synth_II/BPL/LPL"/>
</dbReference>
<dbReference type="InterPro" id="IPR004154">
    <property type="entry name" value="Anticodon-bd"/>
</dbReference>
<dbReference type="InterPro" id="IPR036621">
    <property type="entry name" value="Anticodon-bd_dom_sf"/>
</dbReference>
<dbReference type="InterPro" id="IPR012675">
    <property type="entry name" value="Beta-grasp_dom_sf"/>
</dbReference>
<dbReference type="InterPro" id="IPR004095">
    <property type="entry name" value="TGS"/>
</dbReference>
<dbReference type="InterPro" id="IPR012676">
    <property type="entry name" value="TGS-like"/>
</dbReference>
<dbReference type="InterPro" id="IPR002320">
    <property type="entry name" value="Thr-tRNA-ligase_IIa"/>
</dbReference>
<dbReference type="InterPro" id="IPR018163">
    <property type="entry name" value="Thr/Ala-tRNA-synth_IIc_edit"/>
</dbReference>
<dbReference type="InterPro" id="IPR047246">
    <property type="entry name" value="ThrRS_anticodon"/>
</dbReference>
<dbReference type="InterPro" id="IPR033728">
    <property type="entry name" value="ThrRS_core"/>
</dbReference>
<dbReference type="InterPro" id="IPR012947">
    <property type="entry name" value="tRNA_SAD"/>
</dbReference>
<dbReference type="NCBIfam" id="TIGR00418">
    <property type="entry name" value="thrS"/>
    <property type="match status" value="1"/>
</dbReference>
<dbReference type="PANTHER" id="PTHR11451:SF56">
    <property type="entry name" value="THREONINE--TRNA LIGASE 1"/>
    <property type="match status" value="1"/>
</dbReference>
<dbReference type="PANTHER" id="PTHR11451">
    <property type="entry name" value="THREONINE-TRNA LIGASE"/>
    <property type="match status" value="1"/>
</dbReference>
<dbReference type="Pfam" id="PF03129">
    <property type="entry name" value="HGTP_anticodon"/>
    <property type="match status" value="1"/>
</dbReference>
<dbReference type="Pfam" id="PF02824">
    <property type="entry name" value="TGS"/>
    <property type="match status" value="1"/>
</dbReference>
<dbReference type="Pfam" id="PF00587">
    <property type="entry name" value="tRNA-synt_2b"/>
    <property type="match status" value="1"/>
</dbReference>
<dbReference type="Pfam" id="PF07973">
    <property type="entry name" value="tRNA_SAD"/>
    <property type="match status" value="1"/>
</dbReference>
<dbReference type="PRINTS" id="PR01047">
    <property type="entry name" value="TRNASYNTHTHR"/>
</dbReference>
<dbReference type="SMART" id="SM00863">
    <property type="entry name" value="tRNA_SAD"/>
    <property type="match status" value="1"/>
</dbReference>
<dbReference type="SUPFAM" id="SSF52954">
    <property type="entry name" value="Class II aaRS ABD-related"/>
    <property type="match status" value="1"/>
</dbReference>
<dbReference type="SUPFAM" id="SSF55681">
    <property type="entry name" value="Class II aaRS and biotin synthetases"/>
    <property type="match status" value="1"/>
</dbReference>
<dbReference type="SUPFAM" id="SSF81271">
    <property type="entry name" value="TGS-like"/>
    <property type="match status" value="1"/>
</dbReference>
<dbReference type="SUPFAM" id="SSF55186">
    <property type="entry name" value="ThrRS/AlaRS common domain"/>
    <property type="match status" value="1"/>
</dbReference>
<dbReference type="PROSITE" id="PS50862">
    <property type="entry name" value="AA_TRNA_LIGASE_II"/>
    <property type="match status" value="1"/>
</dbReference>
<dbReference type="PROSITE" id="PS51880">
    <property type="entry name" value="TGS"/>
    <property type="match status" value="1"/>
</dbReference>
<proteinExistence type="inferred from homology"/>
<sequence length="643" mass="73967">MADVVKITFPDGAVKEFPKGVTTEDIAASISPGLKKKAIAGKLNERMIDLRTPIEEDGAISIITQDMPEALDILRHSTAHLMAQAVKRLYKDVKLGVGPVIENGFYYDIDVDVPITAEDLPKIEQEMKKIVKENLDIVRKEVSREEAIRRYEEIGDPLKIELINDIPEGEVVSIYEQGEFFDLCRGVHVPSTGKIKEFKLLSVAGAYWRGDSKNKMLQRIYGTAFFKKEDLDEYLRLLQEAKERDHRKLGKELDLFMTSQKVGQGLPLWLPKGATIRRTIERYIVDKELSLGYQHVYTPVLGSVELYKTSGHWDHYKDGMFPPMEMDNEQLVLRPMNCPHHMMVYKHKIHSYRELPIRIAELGTMHRYEMSGALTGLQRVRGMTLNDAHIFVRPDQIKDEFKRVVNLILDVYKDFGLTDYSFRLSYRDPQDKEKYYDDDAMWEKAQSMLKEAMDELGLDYYEAEGEAAFYGPKLDVQVRTALGKDETLSTVQLDFLLPERFDLTYIGEDGKPHRPVVIHRGVVSTMERFVAFLIEEYKGAFPTWLAPIQVQVIPVAPSIHMDYAYEVKHALQVAGIRVEVDEREEKIGYKIREAQMQKIPYMLVVGDNEVNERAVNVRKYGEQKSETMPLDAFVDSIAKEVRK</sequence>
<name>SYT_ANOFW</name>
<feature type="chain" id="PRO_1000199526" description="Threonine--tRNA ligase">
    <location>
        <begin position="1"/>
        <end position="643"/>
    </location>
</feature>
<feature type="domain" description="TGS" evidence="2">
    <location>
        <begin position="3"/>
        <end position="64"/>
    </location>
</feature>
<feature type="region of interest" description="Catalytic" evidence="1">
    <location>
        <begin position="245"/>
        <end position="542"/>
    </location>
</feature>
<feature type="binding site" evidence="1">
    <location>
        <position position="338"/>
    </location>
    <ligand>
        <name>Zn(2+)</name>
        <dbReference type="ChEBI" id="CHEBI:29105"/>
    </ligand>
</feature>
<feature type="binding site" evidence="1">
    <location>
        <position position="389"/>
    </location>
    <ligand>
        <name>Zn(2+)</name>
        <dbReference type="ChEBI" id="CHEBI:29105"/>
    </ligand>
</feature>
<feature type="binding site" evidence="1">
    <location>
        <position position="519"/>
    </location>
    <ligand>
        <name>Zn(2+)</name>
        <dbReference type="ChEBI" id="CHEBI:29105"/>
    </ligand>
</feature>
<evidence type="ECO:0000255" key="1">
    <source>
        <dbReference type="HAMAP-Rule" id="MF_00184"/>
    </source>
</evidence>
<evidence type="ECO:0000255" key="2">
    <source>
        <dbReference type="PROSITE-ProRule" id="PRU01228"/>
    </source>
</evidence>